<name>RPOB_SACD2</name>
<gene>
    <name evidence="1" type="primary">rpoB</name>
    <name type="ordered locus">Sde_0924</name>
</gene>
<dbReference type="EC" id="2.7.7.6" evidence="1"/>
<dbReference type="EMBL" id="CP000282">
    <property type="protein sequence ID" value="ABD80186.1"/>
    <property type="molecule type" value="Genomic_DNA"/>
</dbReference>
<dbReference type="RefSeq" id="WP_011467407.1">
    <property type="nucleotide sequence ID" value="NC_007912.1"/>
</dbReference>
<dbReference type="SMR" id="Q21M93"/>
<dbReference type="STRING" id="203122.Sde_0924"/>
<dbReference type="GeneID" id="98612610"/>
<dbReference type="KEGG" id="sde:Sde_0924"/>
<dbReference type="eggNOG" id="COG0085">
    <property type="taxonomic scope" value="Bacteria"/>
</dbReference>
<dbReference type="HOGENOM" id="CLU_000524_4_0_6"/>
<dbReference type="OrthoDB" id="9803954at2"/>
<dbReference type="Proteomes" id="UP000001947">
    <property type="component" value="Chromosome"/>
</dbReference>
<dbReference type="GO" id="GO:0000428">
    <property type="term" value="C:DNA-directed RNA polymerase complex"/>
    <property type="evidence" value="ECO:0007669"/>
    <property type="project" value="UniProtKB-KW"/>
</dbReference>
<dbReference type="GO" id="GO:0003677">
    <property type="term" value="F:DNA binding"/>
    <property type="evidence" value="ECO:0007669"/>
    <property type="project" value="UniProtKB-UniRule"/>
</dbReference>
<dbReference type="GO" id="GO:0003899">
    <property type="term" value="F:DNA-directed RNA polymerase activity"/>
    <property type="evidence" value="ECO:0007669"/>
    <property type="project" value="UniProtKB-UniRule"/>
</dbReference>
<dbReference type="GO" id="GO:0032549">
    <property type="term" value="F:ribonucleoside binding"/>
    <property type="evidence" value="ECO:0007669"/>
    <property type="project" value="InterPro"/>
</dbReference>
<dbReference type="GO" id="GO:0006351">
    <property type="term" value="P:DNA-templated transcription"/>
    <property type="evidence" value="ECO:0007669"/>
    <property type="project" value="UniProtKB-UniRule"/>
</dbReference>
<dbReference type="CDD" id="cd00653">
    <property type="entry name" value="RNA_pol_B_RPB2"/>
    <property type="match status" value="1"/>
</dbReference>
<dbReference type="FunFam" id="2.40.270.10:FF:000003">
    <property type="entry name" value="DNA-directed RNA polymerase subunit beta"/>
    <property type="match status" value="1"/>
</dbReference>
<dbReference type="FunFam" id="2.40.50.100:FF:000006">
    <property type="entry name" value="DNA-directed RNA polymerase subunit beta"/>
    <property type="match status" value="1"/>
</dbReference>
<dbReference type="FunFam" id="2.40.50.150:FF:000001">
    <property type="entry name" value="DNA-directed RNA polymerase subunit beta"/>
    <property type="match status" value="1"/>
</dbReference>
<dbReference type="FunFam" id="3.90.1110.10:FF:000001">
    <property type="entry name" value="DNA-directed RNA polymerase subunit beta"/>
    <property type="match status" value="1"/>
</dbReference>
<dbReference type="FunFam" id="3.90.1110.10:FF:000004">
    <property type="entry name" value="DNA-directed RNA polymerase subunit beta"/>
    <property type="match status" value="1"/>
</dbReference>
<dbReference type="FunFam" id="3.90.1800.10:FF:000001">
    <property type="entry name" value="DNA-directed RNA polymerase subunit beta"/>
    <property type="match status" value="1"/>
</dbReference>
<dbReference type="Gene3D" id="2.40.50.100">
    <property type="match status" value="1"/>
</dbReference>
<dbReference type="Gene3D" id="2.40.50.150">
    <property type="match status" value="1"/>
</dbReference>
<dbReference type="Gene3D" id="3.90.1100.10">
    <property type="match status" value="2"/>
</dbReference>
<dbReference type="Gene3D" id="2.30.150.10">
    <property type="entry name" value="DNA-directed RNA polymerase, beta subunit, external 1 domain"/>
    <property type="match status" value="1"/>
</dbReference>
<dbReference type="Gene3D" id="2.40.270.10">
    <property type="entry name" value="DNA-directed RNA polymerase, subunit 2, domain 6"/>
    <property type="match status" value="1"/>
</dbReference>
<dbReference type="Gene3D" id="3.90.1800.10">
    <property type="entry name" value="RNA polymerase alpha subunit dimerisation domain"/>
    <property type="match status" value="1"/>
</dbReference>
<dbReference type="Gene3D" id="3.90.1110.10">
    <property type="entry name" value="RNA polymerase Rpb2, domain 2"/>
    <property type="match status" value="1"/>
</dbReference>
<dbReference type="HAMAP" id="MF_01321">
    <property type="entry name" value="RNApol_bact_RpoB"/>
    <property type="match status" value="1"/>
</dbReference>
<dbReference type="InterPro" id="IPR042107">
    <property type="entry name" value="DNA-dir_RNA_pol_bsu_ext_1_sf"/>
</dbReference>
<dbReference type="InterPro" id="IPR019462">
    <property type="entry name" value="DNA-dir_RNA_pol_bsu_external_1"/>
</dbReference>
<dbReference type="InterPro" id="IPR015712">
    <property type="entry name" value="DNA-dir_RNA_pol_su2"/>
</dbReference>
<dbReference type="InterPro" id="IPR007120">
    <property type="entry name" value="DNA-dir_RNAP_su2_dom"/>
</dbReference>
<dbReference type="InterPro" id="IPR037033">
    <property type="entry name" value="DNA-dir_RNAP_su2_hyb_sf"/>
</dbReference>
<dbReference type="InterPro" id="IPR010243">
    <property type="entry name" value="RNA_pol_bsu_bac"/>
</dbReference>
<dbReference type="InterPro" id="IPR007121">
    <property type="entry name" value="RNA_pol_bsu_CS"/>
</dbReference>
<dbReference type="InterPro" id="IPR007644">
    <property type="entry name" value="RNA_pol_bsu_protrusion"/>
</dbReference>
<dbReference type="InterPro" id="IPR007642">
    <property type="entry name" value="RNA_pol_Rpb2_2"/>
</dbReference>
<dbReference type="InterPro" id="IPR037034">
    <property type="entry name" value="RNA_pol_Rpb2_2_sf"/>
</dbReference>
<dbReference type="InterPro" id="IPR007645">
    <property type="entry name" value="RNA_pol_Rpb2_3"/>
</dbReference>
<dbReference type="InterPro" id="IPR007641">
    <property type="entry name" value="RNA_pol_Rpb2_7"/>
</dbReference>
<dbReference type="InterPro" id="IPR014724">
    <property type="entry name" value="RNA_pol_RPB2_OB-fold"/>
</dbReference>
<dbReference type="NCBIfam" id="NF001616">
    <property type="entry name" value="PRK00405.1"/>
    <property type="match status" value="1"/>
</dbReference>
<dbReference type="NCBIfam" id="TIGR02013">
    <property type="entry name" value="rpoB"/>
    <property type="match status" value="1"/>
</dbReference>
<dbReference type="PANTHER" id="PTHR20856">
    <property type="entry name" value="DNA-DIRECTED RNA POLYMERASE I SUBUNIT 2"/>
    <property type="match status" value="1"/>
</dbReference>
<dbReference type="Pfam" id="PF04563">
    <property type="entry name" value="RNA_pol_Rpb2_1"/>
    <property type="match status" value="1"/>
</dbReference>
<dbReference type="Pfam" id="PF04561">
    <property type="entry name" value="RNA_pol_Rpb2_2"/>
    <property type="match status" value="2"/>
</dbReference>
<dbReference type="Pfam" id="PF04565">
    <property type="entry name" value="RNA_pol_Rpb2_3"/>
    <property type="match status" value="1"/>
</dbReference>
<dbReference type="Pfam" id="PF10385">
    <property type="entry name" value="RNA_pol_Rpb2_45"/>
    <property type="match status" value="1"/>
</dbReference>
<dbReference type="Pfam" id="PF00562">
    <property type="entry name" value="RNA_pol_Rpb2_6"/>
    <property type="match status" value="1"/>
</dbReference>
<dbReference type="Pfam" id="PF04560">
    <property type="entry name" value="RNA_pol_Rpb2_7"/>
    <property type="match status" value="1"/>
</dbReference>
<dbReference type="SUPFAM" id="SSF64484">
    <property type="entry name" value="beta and beta-prime subunits of DNA dependent RNA-polymerase"/>
    <property type="match status" value="1"/>
</dbReference>
<dbReference type="PROSITE" id="PS01166">
    <property type="entry name" value="RNA_POL_BETA"/>
    <property type="match status" value="1"/>
</dbReference>
<protein>
    <recommendedName>
        <fullName evidence="1">DNA-directed RNA polymerase subunit beta</fullName>
        <shortName evidence="1">RNAP subunit beta</shortName>
        <ecNumber evidence="1">2.7.7.6</ecNumber>
    </recommendedName>
    <alternativeName>
        <fullName evidence="1">RNA polymerase subunit beta</fullName>
    </alternativeName>
    <alternativeName>
        <fullName evidence="1">Transcriptase subunit beta</fullName>
    </alternativeName>
</protein>
<comment type="function">
    <text evidence="1">DNA-dependent RNA polymerase catalyzes the transcription of DNA into RNA using the four ribonucleoside triphosphates as substrates.</text>
</comment>
<comment type="catalytic activity">
    <reaction evidence="1">
        <text>RNA(n) + a ribonucleoside 5'-triphosphate = RNA(n+1) + diphosphate</text>
        <dbReference type="Rhea" id="RHEA:21248"/>
        <dbReference type="Rhea" id="RHEA-COMP:14527"/>
        <dbReference type="Rhea" id="RHEA-COMP:17342"/>
        <dbReference type="ChEBI" id="CHEBI:33019"/>
        <dbReference type="ChEBI" id="CHEBI:61557"/>
        <dbReference type="ChEBI" id="CHEBI:140395"/>
        <dbReference type="EC" id="2.7.7.6"/>
    </reaction>
</comment>
<comment type="subunit">
    <text evidence="1">The RNAP catalytic core consists of 2 alpha, 1 beta, 1 beta' and 1 omega subunit. When a sigma factor is associated with the core the holoenzyme is formed, which can initiate transcription.</text>
</comment>
<comment type="similarity">
    <text evidence="1">Belongs to the RNA polymerase beta chain family.</text>
</comment>
<proteinExistence type="inferred from homology"/>
<keyword id="KW-0240">DNA-directed RNA polymerase</keyword>
<keyword id="KW-0548">Nucleotidyltransferase</keyword>
<keyword id="KW-1185">Reference proteome</keyword>
<keyword id="KW-0804">Transcription</keyword>
<keyword id="KW-0808">Transferase</keyword>
<accession>Q21M93</accession>
<evidence type="ECO:0000255" key="1">
    <source>
        <dbReference type="HAMAP-Rule" id="MF_01321"/>
    </source>
</evidence>
<sequence length="1361" mass="151592">MAYSYTEKKRIRKDFGKLPDVMEVPYLLAIQLDSYRKFTQADTPFDQRKDMGLHAAFKSIFPIVSYSGNAALEYVSYALGKPVFDVKECVLRGATYAVPLRVKVRLIIYDKDSSSKAIKDIKEQEVYMGEIPLMTDNGTFVVNGTERVIVSQLHRSPGVFFEHDKGKTHSSGKLLYSARVIPYRGSWLDFEFDPKDLVFVRIDRRRKLPASILLRALGYTTEQMLDMFYETSKFGLTETGECVLELVPSRLRGDVTTFEIKDKDGNLIVEDGRRITARHIRQLEKAGVTELSVPHEYMVGRALAKDIINAESGEVLFECNTEITDEVLAELVKSGVKEFETLYTNELDCGPFISDTLRSDPARTQLEALVEIYRMMRPGEPPTKESAETLFQNLFFSSERYDLSAVGRMKFNRRLGRDSEVGSGTLSNEDIVDVLKTLIDIRNGKGVVDDIDHLGNRRVRSVGEMAENQFRVGLVRVERAVKERLSMAESEGLMPQDLINAKPVAAAVKEFFGSSQLSQFMDQNNPLSEVTHKRRVSALGPGGLTRERAGFEVRDVHPTHYGRVCPIETPEGPNIGLINSLATYARTNSYGFLESPHRKVVDGKVTDEIEYLSAINEAKFVIAQASAAQNENGELTEELVSVRFQNEFTLKGPSEVQYMDVSPRQVVSVAASLIPFLEHDDANRALMGSNMQRQAVPTLKAQKPLVGTGMERNVAADSGVCVVAKRGGVIERVDAARIVVRVADDEVEAGEAGVDIYNLTKYTRSNQNTCINQRSIVRTGEKVSRGDILADGPSVDLGELALGQNMRIAFMPWNGYNFEDSILVSERVVQEDRFTTIHIQELTCIARDTKLGSEEITADIPNVGEGALSKLDESGIVYVGAEVASGDILVGKVTPKGETQLTPEEKLLRAIFGEKASDVKDTSLRVPSSVKGTVIDVQVFTRDGLEKDQRSRDIEKAQLDQIRKDLNEEYRIVQGATFERLRAALVGNTAMTGKGVVKGQPVTDEMLDELSHDDWFKIRMNDDVLNEQIDAAEVALAERRKELDDRFEDKKGKLETGDDLAPGVLKIVKVYLAIKRRIQPGDKMAGRHGNKGVISVIMPVEDMPYDENGNPIDIVLNPLGVPSRMNVGQVLEMHLGLAAKSLGEKIDEMLKQQKAVAEIRQFLDQIYNQIGESYKAEELDTFSDDEIIELANNLRDGVPMATRAFDGAKEKEIKQLLTLGGMPDSGQMTLFDGRTGDPFQRPTTVGYMYMLKLNHLVDDKMHARSTGSYSLVTQQPLGGKAQFGGQRFGEMEVWALEAYGAAYTLQEMLTVKSDDVAGRTKMYKNIVDGDHRMEPGMPESFNVLVKEIRSLGINIELEQDN</sequence>
<feature type="chain" id="PRO_0000300394" description="DNA-directed RNA polymerase subunit beta">
    <location>
        <begin position="1"/>
        <end position="1361"/>
    </location>
</feature>
<reference key="1">
    <citation type="journal article" date="2008" name="PLoS Genet.">
        <title>Complete genome sequence of the complex carbohydrate-degrading marine bacterium, Saccharophagus degradans strain 2-40 T.</title>
        <authorList>
            <person name="Weiner R.M."/>
            <person name="Taylor L.E. II"/>
            <person name="Henrissat B."/>
            <person name="Hauser L."/>
            <person name="Land M."/>
            <person name="Coutinho P.M."/>
            <person name="Rancurel C."/>
            <person name="Saunders E.H."/>
            <person name="Longmire A.G."/>
            <person name="Zhang H."/>
            <person name="Bayer E.A."/>
            <person name="Gilbert H.J."/>
            <person name="Larimer F."/>
            <person name="Zhulin I.B."/>
            <person name="Ekborg N.A."/>
            <person name="Lamed R."/>
            <person name="Richardson P.M."/>
            <person name="Borovok I."/>
            <person name="Hutcheson S."/>
        </authorList>
    </citation>
    <scope>NUCLEOTIDE SEQUENCE [LARGE SCALE GENOMIC DNA]</scope>
    <source>
        <strain>2-40 / ATCC 43961 / DSM 17024</strain>
    </source>
</reference>
<organism>
    <name type="scientific">Saccharophagus degradans (strain 2-40 / ATCC 43961 / DSM 17024)</name>
    <dbReference type="NCBI Taxonomy" id="203122"/>
    <lineage>
        <taxon>Bacteria</taxon>
        <taxon>Pseudomonadati</taxon>
        <taxon>Pseudomonadota</taxon>
        <taxon>Gammaproteobacteria</taxon>
        <taxon>Cellvibrionales</taxon>
        <taxon>Cellvibrionaceae</taxon>
        <taxon>Saccharophagus</taxon>
    </lineage>
</organism>